<protein>
    <recommendedName>
        <fullName evidence="1">Octanoyltransferase LipM</fullName>
        <ecNumber evidence="1">2.3.1.181</ecNumber>
    </recommendedName>
    <alternativeName>
        <fullName evidence="1">Octanoyl-[acyl-carrier-protein]:[GcvH] N-octanoyltransferase</fullName>
    </alternativeName>
</protein>
<proteinExistence type="inferred from homology"/>
<gene>
    <name evidence="1" type="primary">lipM</name>
    <name type="ordered locus">Btus_1765</name>
</gene>
<sequence>MQTWRLLHTGKGSAAFNMAVDEAVMIAHSRGEVPPTLRLYGWDPPTLSIGYFQRAGKEVDFEALSARGYGFVRRPTGGRAVLHDREVTYSVVVSESYPGMPGSVTESYRVISEGLVRGLRKLGFDAHFARPDEEGRQRLAAPSSAACFDSPSWYEVVVEGKKLVGSAQTRQRGVILQHGSILLDLDPEALFAVLRFPSDRVRDRLRRTFEEHAVSLRDLAGAPVSAERVEEALAEGFAEALGARLEPGELTAEERETAEQLMAKYLADEWNYRK</sequence>
<accession>D5WQ56</accession>
<keyword id="KW-0012">Acyltransferase</keyword>
<keyword id="KW-0808">Transferase</keyword>
<name>LIPM_KYRT2</name>
<evidence type="ECO:0000255" key="1">
    <source>
        <dbReference type="HAMAP-Rule" id="MF_02118"/>
    </source>
</evidence>
<evidence type="ECO:0000255" key="2">
    <source>
        <dbReference type="PROSITE-ProRule" id="PRU01067"/>
    </source>
</evidence>
<comment type="function">
    <text evidence="1">Catalyzes the transfer of endogenously produced octanoic acid from octanoyl-acyl-carrier-protein onto the lipoyl domain of GcvH, an intermediate carrier during protein lipoylation.</text>
</comment>
<comment type="catalytic activity">
    <reaction evidence="1">
        <text>octanoyl-[ACP] + L-lysyl-[protein] = N(6)-octanoyl-L-lysyl-[protein] + holo-[ACP] + H(+)</text>
        <dbReference type="Rhea" id="RHEA:17665"/>
        <dbReference type="Rhea" id="RHEA-COMP:9636"/>
        <dbReference type="Rhea" id="RHEA-COMP:9685"/>
        <dbReference type="Rhea" id="RHEA-COMP:9752"/>
        <dbReference type="Rhea" id="RHEA-COMP:9928"/>
        <dbReference type="ChEBI" id="CHEBI:15378"/>
        <dbReference type="ChEBI" id="CHEBI:29969"/>
        <dbReference type="ChEBI" id="CHEBI:64479"/>
        <dbReference type="ChEBI" id="CHEBI:78463"/>
        <dbReference type="ChEBI" id="CHEBI:78809"/>
        <dbReference type="EC" id="2.3.1.181"/>
    </reaction>
</comment>
<comment type="pathway">
    <text evidence="1">Protein modification; protein lipoylation via endogenous pathway; protein N(6)-(lipoyl)lysine from octanoyl-[acyl-carrier-protein].</text>
</comment>
<comment type="subunit">
    <text evidence="1">Monomer.</text>
</comment>
<comment type="miscellaneous">
    <text evidence="1">In the reaction, the free carboxyl group of octanoic acid is attached via an amide linkage to the epsilon-amino group of a specific lysine residue of lipoyl domains of lipoate-dependent enzymes. The reaction proceeds via an octanoyl-thioester enzyme intermediate.</text>
</comment>
<comment type="similarity">
    <text evidence="1">Belongs to the octanoyltransferase LipM family.</text>
</comment>
<reference key="1">
    <citation type="submission" date="2010-04" db="EMBL/GenBank/DDBJ databases">
        <title>The complete genome of Bacillus tusciae DSM 2912.</title>
        <authorList>
            <consortium name="US DOE Joint Genome Institute (JGI-PGF)"/>
            <person name="Lucas S."/>
            <person name="Copeland A."/>
            <person name="Lapidus A."/>
            <person name="Glavina del Rio T."/>
            <person name="Dalin E."/>
            <person name="Tice H."/>
            <person name="Bruce D."/>
            <person name="Goodwin L."/>
            <person name="Pitluck S."/>
            <person name="Kyrpides N."/>
            <person name="Mavromatis K."/>
            <person name="Ivanova N."/>
            <person name="Ovchinnikova G."/>
            <person name="Chertkov O."/>
            <person name="Brettin T."/>
            <person name="Detter J.C."/>
            <person name="Han C."/>
            <person name="Larimer F."/>
            <person name="Land M."/>
            <person name="Hauser L."/>
            <person name="Markowitz V."/>
            <person name="Cheng J.-F."/>
            <person name="Hugenholtz P."/>
            <person name="Woyke T."/>
            <person name="Wu D."/>
            <person name="Pukall R."/>
            <person name="Schneider S."/>
            <person name="Wahrenburg C."/>
            <person name="Klenk H.-P."/>
            <person name="Eisen J.A."/>
        </authorList>
    </citation>
    <scope>NUCLEOTIDE SEQUENCE [LARGE SCALE GENOMIC DNA]</scope>
    <source>
        <strain>DSM 2912 / NBRC 15312 / T2</strain>
    </source>
</reference>
<feature type="chain" id="PRO_0000410852" description="Octanoyltransferase LipM">
    <location>
        <begin position="1"/>
        <end position="274"/>
    </location>
</feature>
<feature type="domain" description="BPL/LPL catalytic" evidence="2">
    <location>
        <begin position="31"/>
        <end position="245"/>
    </location>
</feature>
<feature type="active site" description="Acyl-thioester intermediate" evidence="1">
    <location>
        <position position="147"/>
    </location>
</feature>
<feature type="site" description="Lowers pKa of active site Cys" evidence="1">
    <location>
        <position position="162"/>
    </location>
</feature>
<dbReference type="EC" id="2.3.1.181" evidence="1"/>
<dbReference type="EMBL" id="CP002017">
    <property type="protein sequence ID" value="ADG06465.1"/>
    <property type="molecule type" value="Genomic_DNA"/>
</dbReference>
<dbReference type="RefSeq" id="WP_013075751.1">
    <property type="nucleotide sequence ID" value="NC_014098.1"/>
</dbReference>
<dbReference type="SMR" id="D5WQ56"/>
<dbReference type="STRING" id="562970.Btus_1765"/>
<dbReference type="KEGG" id="bts:Btus_1765"/>
<dbReference type="eggNOG" id="COG0095">
    <property type="taxonomic scope" value="Bacteria"/>
</dbReference>
<dbReference type="HOGENOM" id="CLU_022986_5_0_9"/>
<dbReference type="OrthoDB" id="9774653at2"/>
<dbReference type="Proteomes" id="UP000002368">
    <property type="component" value="Chromosome"/>
</dbReference>
<dbReference type="GO" id="GO:0033819">
    <property type="term" value="F:lipoyl(octanoyl) transferase activity"/>
    <property type="evidence" value="ECO:0007669"/>
    <property type="project" value="UniProtKB-UniRule"/>
</dbReference>
<dbReference type="GO" id="GO:0009107">
    <property type="term" value="P:lipoate biosynthetic process"/>
    <property type="evidence" value="ECO:0007669"/>
    <property type="project" value="UniProtKB-UniRule"/>
</dbReference>
<dbReference type="GO" id="GO:0036211">
    <property type="term" value="P:protein modification process"/>
    <property type="evidence" value="ECO:0007669"/>
    <property type="project" value="InterPro"/>
</dbReference>
<dbReference type="CDD" id="cd16443">
    <property type="entry name" value="LplA"/>
    <property type="match status" value="1"/>
</dbReference>
<dbReference type="Gene3D" id="3.30.930.10">
    <property type="entry name" value="Bira Bifunctional Protein, Domain 2"/>
    <property type="match status" value="1"/>
</dbReference>
<dbReference type="HAMAP" id="MF_02118">
    <property type="entry name" value="LipM"/>
    <property type="match status" value="1"/>
</dbReference>
<dbReference type="InterPro" id="IPR045864">
    <property type="entry name" value="aa-tRNA-synth_II/BPL/LPL"/>
</dbReference>
<dbReference type="InterPro" id="IPR004143">
    <property type="entry name" value="BPL_LPL_catalytic"/>
</dbReference>
<dbReference type="InterPro" id="IPR024898">
    <property type="entry name" value="LipM"/>
</dbReference>
<dbReference type="InterPro" id="IPR050664">
    <property type="entry name" value="Octanoyltrans_LipM/LipL"/>
</dbReference>
<dbReference type="PANTHER" id="PTHR43679:SF2">
    <property type="entry name" value="OCTANOYL-[GCVH]:PROTEIN N-OCTANOYLTRANSFERASE"/>
    <property type="match status" value="1"/>
</dbReference>
<dbReference type="PANTHER" id="PTHR43679">
    <property type="entry name" value="OCTANOYLTRANSFERASE LIPM-RELATED"/>
    <property type="match status" value="1"/>
</dbReference>
<dbReference type="Pfam" id="PF21948">
    <property type="entry name" value="LplA-B_cat"/>
    <property type="match status" value="1"/>
</dbReference>
<dbReference type="SUPFAM" id="SSF55681">
    <property type="entry name" value="Class II aaRS and biotin synthetases"/>
    <property type="match status" value="1"/>
</dbReference>
<dbReference type="PROSITE" id="PS51733">
    <property type="entry name" value="BPL_LPL_CATALYTIC"/>
    <property type="match status" value="1"/>
</dbReference>
<organism>
    <name type="scientific">Kyrpidia tusciae (strain DSM 2912 / NBRC 15312 / T2)</name>
    <name type="common">Bacillus tusciae</name>
    <dbReference type="NCBI Taxonomy" id="562970"/>
    <lineage>
        <taxon>Bacteria</taxon>
        <taxon>Bacillati</taxon>
        <taxon>Bacillota</taxon>
        <taxon>Bacilli</taxon>
        <taxon>Bacillales</taxon>
        <taxon>Alicyclobacillaceae</taxon>
        <taxon>Kyrpidia</taxon>
    </lineage>
</organism>